<feature type="chain" id="PRO_1000143812" description="Large ribosomal subunit protein bL21">
    <location>
        <begin position="1"/>
        <end position="103"/>
    </location>
</feature>
<organism>
    <name type="scientific">Kocuria rhizophila (strain ATCC 9341 / DSM 348 / NBRC 103217 / DC2201)</name>
    <dbReference type="NCBI Taxonomy" id="378753"/>
    <lineage>
        <taxon>Bacteria</taxon>
        <taxon>Bacillati</taxon>
        <taxon>Actinomycetota</taxon>
        <taxon>Actinomycetes</taxon>
        <taxon>Micrococcales</taxon>
        <taxon>Micrococcaceae</taxon>
        <taxon>Kocuria</taxon>
    </lineage>
</organism>
<name>RL21_KOCRD</name>
<gene>
    <name evidence="1" type="primary">rplU</name>
    <name type="ordered locus">KRH_11300</name>
</gene>
<keyword id="KW-1185">Reference proteome</keyword>
<keyword id="KW-0687">Ribonucleoprotein</keyword>
<keyword id="KW-0689">Ribosomal protein</keyword>
<keyword id="KW-0694">RNA-binding</keyword>
<keyword id="KW-0699">rRNA-binding</keyword>
<reference key="1">
    <citation type="journal article" date="2008" name="J. Bacteriol.">
        <title>Complete genome sequence of the soil actinomycete Kocuria rhizophila.</title>
        <authorList>
            <person name="Takarada H."/>
            <person name="Sekine M."/>
            <person name="Kosugi H."/>
            <person name="Matsuo Y."/>
            <person name="Fujisawa T."/>
            <person name="Omata S."/>
            <person name="Kishi E."/>
            <person name="Shimizu A."/>
            <person name="Tsukatani N."/>
            <person name="Tanikawa S."/>
            <person name="Fujita N."/>
            <person name="Harayama S."/>
        </authorList>
    </citation>
    <scope>NUCLEOTIDE SEQUENCE [LARGE SCALE GENOMIC DNA]</scope>
    <source>
        <strain>ATCC 9341 / DSM 348 / NBRC 103217 / DC2201</strain>
    </source>
</reference>
<proteinExistence type="inferred from homology"/>
<protein>
    <recommendedName>
        <fullName evidence="1">Large ribosomal subunit protein bL21</fullName>
    </recommendedName>
    <alternativeName>
        <fullName evidence="2">50S ribosomal protein L21</fullName>
    </alternativeName>
</protein>
<comment type="function">
    <text evidence="1">This protein binds to 23S rRNA in the presence of protein L20.</text>
</comment>
<comment type="subunit">
    <text evidence="1">Part of the 50S ribosomal subunit. Contacts protein L20.</text>
</comment>
<comment type="similarity">
    <text evidence="1">Belongs to the bacterial ribosomal protein bL21 family.</text>
</comment>
<sequence>MVYAIVRAGGRQEKVSVGDLVTLDRVAGEAGSTVELPALLLVDGDKVTSDSKTLADVKVTAEIIEDLRGPKISIMKYKNKTGYKKRQGFRAELTTVKITGIDA</sequence>
<evidence type="ECO:0000255" key="1">
    <source>
        <dbReference type="HAMAP-Rule" id="MF_01363"/>
    </source>
</evidence>
<evidence type="ECO:0000305" key="2"/>
<accession>B2GGD7</accession>
<dbReference type="EMBL" id="AP009152">
    <property type="protein sequence ID" value="BAG29477.1"/>
    <property type="molecule type" value="Genomic_DNA"/>
</dbReference>
<dbReference type="RefSeq" id="WP_012398198.1">
    <property type="nucleotide sequence ID" value="NZ_VECX01000005.1"/>
</dbReference>
<dbReference type="SMR" id="B2GGD7"/>
<dbReference type="STRING" id="378753.KRH_11300"/>
<dbReference type="KEGG" id="krh:KRH_11300"/>
<dbReference type="eggNOG" id="COG0261">
    <property type="taxonomic scope" value="Bacteria"/>
</dbReference>
<dbReference type="HOGENOM" id="CLU_061463_3_0_11"/>
<dbReference type="OrthoDB" id="9813334at2"/>
<dbReference type="Proteomes" id="UP000008838">
    <property type="component" value="Chromosome"/>
</dbReference>
<dbReference type="GO" id="GO:0005737">
    <property type="term" value="C:cytoplasm"/>
    <property type="evidence" value="ECO:0007669"/>
    <property type="project" value="UniProtKB-ARBA"/>
</dbReference>
<dbReference type="GO" id="GO:1990904">
    <property type="term" value="C:ribonucleoprotein complex"/>
    <property type="evidence" value="ECO:0007669"/>
    <property type="project" value="UniProtKB-KW"/>
</dbReference>
<dbReference type="GO" id="GO:0005840">
    <property type="term" value="C:ribosome"/>
    <property type="evidence" value="ECO:0007669"/>
    <property type="project" value="UniProtKB-KW"/>
</dbReference>
<dbReference type="GO" id="GO:0019843">
    <property type="term" value="F:rRNA binding"/>
    <property type="evidence" value="ECO:0007669"/>
    <property type="project" value="UniProtKB-UniRule"/>
</dbReference>
<dbReference type="GO" id="GO:0003735">
    <property type="term" value="F:structural constituent of ribosome"/>
    <property type="evidence" value="ECO:0007669"/>
    <property type="project" value="InterPro"/>
</dbReference>
<dbReference type="GO" id="GO:0006412">
    <property type="term" value="P:translation"/>
    <property type="evidence" value="ECO:0007669"/>
    <property type="project" value="UniProtKB-UniRule"/>
</dbReference>
<dbReference type="HAMAP" id="MF_01363">
    <property type="entry name" value="Ribosomal_bL21"/>
    <property type="match status" value="1"/>
</dbReference>
<dbReference type="InterPro" id="IPR028909">
    <property type="entry name" value="bL21-like"/>
</dbReference>
<dbReference type="InterPro" id="IPR036164">
    <property type="entry name" value="bL21-like_sf"/>
</dbReference>
<dbReference type="InterPro" id="IPR001787">
    <property type="entry name" value="Ribosomal_bL21"/>
</dbReference>
<dbReference type="NCBIfam" id="TIGR00061">
    <property type="entry name" value="L21"/>
    <property type="match status" value="1"/>
</dbReference>
<dbReference type="PANTHER" id="PTHR21349">
    <property type="entry name" value="50S RIBOSOMAL PROTEIN L21"/>
    <property type="match status" value="1"/>
</dbReference>
<dbReference type="PANTHER" id="PTHR21349:SF0">
    <property type="entry name" value="LARGE RIBOSOMAL SUBUNIT PROTEIN BL21M"/>
    <property type="match status" value="1"/>
</dbReference>
<dbReference type="Pfam" id="PF00829">
    <property type="entry name" value="Ribosomal_L21p"/>
    <property type="match status" value="1"/>
</dbReference>
<dbReference type="SUPFAM" id="SSF141091">
    <property type="entry name" value="L21p-like"/>
    <property type="match status" value="1"/>
</dbReference>